<comment type="similarity">
    <text evidence="1">Belongs to the LDH/MDH superfamily. MDH type 2 family.</text>
</comment>
<dbReference type="EC" id="1.1.1.-"/>
<dbReference type="EMBL" id="BC133372">
    <property type="protein sequence ID" value="AAI33373.1"/>
    <property type="molecule type" value="mRNA"/>
</dbReference>
<dbReference type="RefSeq" id="NP_001076921.1">
    <property type="nucleotide sequence ID" value="NM_001083452.1"/>
</dbReference>
<dbReference type="SMR" id="A3KMX7"/>
<dbReference type="FunCoup" id="A3KMX7">
    <property type="interactions" value="258"/>
</dbReference>
<dbReference type="STRING" id="9913.ENSBTAP00000070202"/>
<dbReference type="PaxDb" id="9913-ENSBTAP00000038086"/>
<dbReference type="GeneID" id="527943"/>
<dbReference type="KEGG" id="bta:527943"/>
<dbReference type="CTD" id="130752"/>
<dbReference type="VEuPathDB" id="HostDB:ENSBTAG00000016192"/>
<dbReference type="eggNOG" id="KOG1496">
    <property type="taxonomic scope" value="Eukaryota"/>
</dbReference>
<dbReference type="HOGENOM" id="CLU_040727_2_3_1"/>
<dbReference type="InParanoid" id="A3KMX7"/>
<dbReference type="OrthoDB" id="1510206at2759"/>
<dbReference type="TreeFam" id="TF329007"/>
<dbReference type="Proteomes" id="UP000009136">
    <property type="component" value="Chromosome 2"/>
</dbReference>
<dbReference type="Bgee" id="ENSBTAG00000016192">
    <property type="expression patterns" value="Expressed in semen and 89 other cell types or tissues"/>
</dbReference>
<dbReference type="GO" id="GO:0030060">
    <property type="term" value="F:L-malate dehydrogenase (NAD+) activity"/>
    <property type="evidence" value="ECO:0000318"/>
    <property type="project" value="GO_Central"/>
</dbReference>
<dbReference type="GO" id="GO:0006108">
    <property type="term" value="P:malate metabolic process"/>
    <property type="evidence" value="ECO:0000318"/>
    <property type="project" value="GO_Central"/>
</dbReference>
<dbReference type="GO" id="GO:0006734">
    <property type="term" value="P:NADH metabolic process"/>
    <property type="evidence" value="ECO:0000318"/>
    <property type="project" value="GO_Central"/>
</dbReference>
<dbReference type="GO" id="GO:0006107">
    <property type="term" value="P:oxaloacetate metabolic process"/>
    <property type="evidence" value="ECO:0000318"/>
    <property type="project" value="GO_Central"/>
</dbReference>
<dbReference type="GO" id="GO:0006099">
    <property type="term" value="P:tricarboxylic acid cycle"/>
    <property type="evidence" value="ECO:0000318"/>
    <property type="project" value="GO_Central"/>
</dbReference>
<dbReference type="FunFam" id="3.40.50.720:FF:000322">
    <property type="entry name" value="Putative malate dehydrogenase 1B"/>
    <property type="match status" value="1"/>
</dbReference>
<dbReference type="FunFam" id="3.90.110.10:FF:000006">
    <property type="entry name" value="putative malate dehydrogenase 1B"/>
    <property type="match status" value="1"/>
</dbReference>
<dbReference type="Gene3D" id="3.90.110.10">
    <property type="entry name" value="Lactate dehydrogenase/glycoside hydrolase, family 4, C-terminal"/>
    <property type="match status" value="1"/>
</dbReference>
<dbReference type="Gene3D" id="3.40.50.720">
    <property type="entry name" value="NAD(P)-binding Rossmann-like Domain"/>
    <property type="match status" value="1"/>
</dbReference>
<dbReference type="InterPro" id="IPR022383">
    <property type="entry name" value="Lactate/malate_DH_C"/>
</dbReference>
<dbReference type="InterPro" id="IPR015955">
    <property type="entry name" value="Lactate_DH/Glyco_Ohase_4_C"/>
</dbReference>
<dbReference type="InterPro" id="IPR010945">
    <property type="entry name" value="Malate_DH_type2"/>
</dbReference>
<dbReference type="InterPro" id="IPR036291">
    <property type="entry name" value="NAD(P)-bd_dom_sf"/>
</dbReference>
<dbReference type="PANTHER" id="PTHR23382">
    <property type="entry name" value="MALATE DEHYDROGENASE"/>
    <property type="match status" value="1"/>
</dbReference>
<dbReference type="Pfam" id="PF02866">
    <property type="entry name" value="Ldh_1_C"/>
    <property type="match status" value="1"/>
</dbReference>
<dbReference type="SUPFAM" id="SSF56327">
    <property type="entry name" value="LDH C-terminal domain-like"/>
    <property type="match status" value="1"/>
</dbReference>
<dbReference type="SUPFAM" id="SSF51735">
    <property type="entry name" value="NAD(P)-binding Rossmann-fold domains"/>
    <property type="match status" value="1"/>
</dbReference>
<sequence length="473" mass="53088">MAKFVLAGRADCPYYAKAELLADYLQKNLPDFRIHKITQHPDIWEEWLKDLCKKNRWSHNKSPIIWRELLDRGGKGLLLGGYNEFLEHAQLYYGVTSSMTTELMKRVAQENLGTHIEKELEKESLKGLVNPLQVWITSASSLACYHLIPILTSGEVFGPQMEISINLFDNKHTEEKLISHKQEAEDLASPCLQSVSICTQAEEAFHGAHVIIILDDHVDKEINSLEDCIRSRAPLCQLYGSLIEKNAHNFAKIIVGGKTFVNLKTALLMKYAPTFAHNIIAVALGVEGQAKAALARKLKITPSCIKDVIIWGNISGNNYVDLRKAKVYRYESAIWGPPHYSRPVLSLLFDREWVNREFVVSLKTLTATGRQFGGMLAAHSIATTLKYWCHGSPPGEIVSLGVLSEGQFGIPKGIVFSMPVKFENGTWVVLTDLKNTEISQQVMTRMANDLIQEQLVALGELANFQPYQSENLI</sequence>
<organism>
    <name type="scientific">Bos taurus</name>
    <name type="common">Bovine</name>
    <dbReference type="NCBI Taxonomy" id="9913"/>
    <lineage>
        <taxon>Eukaryota</taxon>
        <taxon>Metazoa</taxon>
        <taxon>Chordata</taxon>
        <taxon>Craniata</taxon>
        <taxon>Vertebrata</taxon>
        <taxon>Euteleostomi</taxon>
        <taxon>Mammalia</taxon>
        <taxon>Eutheria</taxon>
        <taxon>Laurasiatheria</taxon>
        <taxon>Artiodactyla</taxon>
        <taxon>Ruminantia</taxon>
        <taxon>Pecora</taxon>
        <taxon>Bovidae</taxon>
        <taxon>Bovinae</taxon>
        <taxon>Bos</taxon>
    </lineage>
</organism>
<name>MDH1B_BOVIN</name>
<protein>
    <recommendedName>
        <fullName>Putative malate dehydrogenase 1B</fullName>
        <ecNumber>1.1.1.-</ecNumber>
    </recommendedName>
</protein>
<proteinExistence type="evidence at transcript level"/>
<reference key="1">
    <citation type="submission" date="2007-02" db="EMBL/GenBank/DDBJ databases">
        <authorList>
            <consortium name="NIH - Mammalian Gene Collection (MGC) project"/>
        </authorList>
    </citation>
    <scope>NUCLEOTIDE SEQUENCE [LARGE SCALE MRNA]</scope>
    <source>
        <strain>Hereford</strain>
        <tissue>Fetal skin</tissue>
    </source>
</reference>
<gene>
    <name type="primary">MDH1B</name>
</gene>
<evidence type="ECO:0000305" key="1"/>
<accession>A3KMX7</accession>
<feature type="chain" id="PRO_0000331434" description="Putative malate dehydrogenase 1B">
    <location>
        <begin position="1"/>
        <end position="473"/>
    </location>
</feature>
<keyword id="KW-0520">NAD</keyword>
<keyword id="KW-0560">Oxidoreductase</keyword>
<keyword id="KW-1185">Reference proteome</keyword>
<keyword id="KW-0816">Tricarboxylic acid cycle</keyword>